<comment type="function">
    <text evidence="1">Involved in the biosynthesis of isopentenyl diphosphate (IPP) and dimethylallyl diphosphate (DMAPP), two major building blocks of isoprenoid compounds. Catalyzes the conversion of 4-diphosphocytidyl-2-C-methyl-D-erythritol 2-phosphate (CDP-ME2P) to 2-C-methyl-D-erythritol 2,4-cyclodiphosphate (ME-CPP) with a corresponding release of cytidine 5-monophosphate (CMP).</text>
</comment>
<comment type="catalytic activity">
    <reaction evidence="1">
        <text>4-CDP-2-C-methyl-D-erythritol 2-phosphate = 2-C-methyl-D-erythritol 2,4-cyclic diphosphate + CMP</text>
        <dbReference type="Rhea" id="RHEA:23864"/>
        <dbReference type="ChEBI" id="CHEBI:57919"/>
        <dbReference type="ChEBI" id="CHEBI:58483"/>
        <dbReference type="ChEBI" id="CHEBI:60377"/>
        <dbReference type="EC" id="4.6.1.12"/>
    </reaction>
</comment>
<comment type="cofactor">
    <cofactor evidence="1">
        <name>a divalent metal cation</name>
        <dbReference type="ChEBI" id="CHEBI:60240"/>
    </cofactor>
    <text evidence="1">Binds 1 divalent metal cation per subunit.</text>
</comment>
<comment type="pathway">
    <text evidence="1">Isoprenoid biosynthesis; isopentenyl diphosphate biosynthesis via DXP pathway; isopentenyl diphosphate from 1-deoxy-D-xylulose 5-phosphate: step 4/6.</text>
</comment>
<comment type="subunit">
    <text evidence="1">Homotrimer.</text>
</comment>
<comment type="similarity">
    <text evidence="1">Belongs to the IspF family.</text>
</comment>
<sequence>MRVGHGFDIHKFGKIYKPLILGGVHIPYCKGVVSHSDGDVIIHSIIDSLLGASSLGDIGILFPNNDIKYKNINSCILLQVVWNCIKKKYKIGNIDVTLFLEYPKISSYTNKICLCISNCLKCKTDVINIKSKTMEGLGEIGKKKGIASEAVSVLLEI</sequence>
<protein>
    <recommendedName>
        <fullName evidence="1">2-C-methyl-D-erythritol 2,4-cyclodiphosphate synthase</fullName>
        <shortName evidence="1">MECDP-synthase</shortName>
        <shortName evidence="1">MECPP-synthase</shortName>
        <shortName evidence="1">MECPS</shortName>
        <ecNumber evidence="1">4.6.1.12</ecNumber>
    </recommendedName>
</protein>
<proteinExistence type="inferred from homology"/>
<accession>Q8D224</accession>
<evidence type="ECO:0000255" key="1">
    <source>
        <dbReference type="HAMAP-Rule" id="MF_00107"/>
    </source>
</evidence>
<dbReference type="EC" id="4.6.1.12" evidence="1"/>
<dbReference type="EMBL" id="BA000021">
    <property type="protein sequence ID" value="BAC24677.1"/>
    <property type="molecule type" value="Genomic_DNA"/>
</dbReference>
<dbReference type="SMR" id="Q8D224"/>
<dbReference type="STRING" id="36870.gene:10369040"/>
<dbReference type="KEGG" id="wbr:ygbB"/>
<dbReference type="eggNOG" id="COG0245">
    <property type="taxonomic scope" value="Bacteria"/>
</dbReference>
<dbReference type="HOGENOM" id="CLU_084630_2_0_6"/>
<dbReference type="OrthoDB" id="9804336at2"/>
<dbReference type="UniPathway" id="UPA00056">
    <property type="reaction ID" value="UER00095"/>
</dbReference>
<dbReference type="Proteomes" id="UP000000562">
    <property type="component" value="Chromosome"/>
</dbReference>
<dbReference type="GO" id="GO:0008685">
    <property type="term" value="F:2-C-methyl-D-erythritol 2,4-cyclodiphosphate synthase activity"/>
    <property type="evidence" value="ECO:0007669"/>
    <property type="project" value="UniProtKB-UniRule"/>
</dbReference>
<dbReference type="GO" id="GO:0046872">
    <property type="term" value="F:metal ion binding"/>
    <property type="evidence" value="ECO:0007669"/>
    <property type="project" value="UniProtKB-KW"/>
</dbReference>
<dbReference type="GO" id="GO:0019288">
    <property type="term" value="P:isopentenyl diphosphate biosynthetic process, methylerythritol 4-phosphate pathway"/>
    <property type="evidence" value="ECO:0007669"/>
    <property type="project" value="UniProtKB-UniRule"/>
</dbReference>
<dbReference type="GO" id="GO:0016114">
    <property type="term" value="P:terpenoid biosynthetic process"/>
    <property type="evidence" value="ECO:0007669"/>
    <property type="project" value="InterPro"/>
</dbReference>
<dbReference type="CDD" id="cd00554">
    <property type="entry name" value="MECDP_synthase"/>
    <property type="match status" value="1"/>
</dbReference>
<dbReference type="Gene3D" id="3.30.1330.50">
    <property type="entry name" value="2-C-methyl-D-erythritol 2,4-cyclodiphosphate synthase"/>
    <property type="match status" value="1"/>
</dbReference>
<dbReference type="HAMAP" id="MF_00107">
    <property type="entry name" value="IspF"/>
    <property type="match status" value="1"/>
</dbReference>
<dbReference type="InterPro" id="IPR003526">
    <property type="entry name" value="MECDP_synthase"/>
</dbReference>
<dbReference type="InterPro" id="IPR020555">
    <property type="entry name" value="MECDP_synthase_CS"/>
</dbReference>
<dbReference type="InterPro" id="IPR036571">
    <property type="entry name" value="MECDP_synthase_sf"/>
</dbReference>
<dbReference type="NCBIfam" id="TIGR00151">
    <property type="entry name" value="ispF"/>
    <property type="match status" value="1"/>
</dbReference>
<dbReference type="PANTHER" id="PTHR43181">
    <property type="entry name" value="2-C-METHYL-D-ERYTHRITOL 2,4-CYCLODIPHOSPHATE SYNTHASE, CHLOROPLASTIC"/>
    <property type="match status" value="1"/>
</dbReference>
<dbReference type="PANTHER" id="PTHR43181:SF1">
    <property type="entry name" value="2-C-METHYL-D-ERYTHRITOL 2,4-CYCLODIPHOSPHATE SYNTHASE, CHLOROPLASTIC"/>
    <property type="match status" value="1"/>
</dbReference>
<dbReference type="Pfam" id="PF02542">
    <property type="entry name" value="YgbB"/>
    <property type="match status" value="1"/>
</dbReference>
<dbReference type="SUPFAM" id="SSF69765">
    <property type="entry name" value="IpsF-like"/>
    <property type="match status" value="1"/>
</dbReference>
<dbReference type="PROSITE" id="PS01350">
    <property type="entry name" value="ISPF"/>
    <property type="match status" value="1"/>
</dbReference>
<reference key="1">
    <citation type="journal article" date="2002" name="Nat. Genet.">
        <title>Genome sequence of the endocellular obligate symbiont of tsetse flies, Wigglesworthia glossinidia.</title>
        <authorList>
            <person name="Akman L."/>
            <person name="Yamashita A."/>
            <person name="Watanabe H."/>
            <person name="Oshima K."/>
            <person name="Shiba T."/>
            <person name="Hattori M."/>
            <person name="Aksoy S."/>
        </authorList>
    </citation>
    <scope>NUCLEOTIDE SEQUENCE [LARGE SCALE GENOMIC DNA]</scope>
</reference>
<organism>
    <name type="scientific">Wigglesworthia glossinidia brevipalpis</name>
    <dbReference type="NCBI Taxonomy" id="36870"/>
    <lineage>
        <taxon>Bacteria</taxon>
        <taxon>Pseudomonadati</taxon>
        <taxon>Pseudomonadota</taxon>
        <taxon>Gammaproteobacteria</taxon>
        <taxon>Enterobacterales</taxon>
        <taxon>Erwiniaceae</taxon>
        <taxon>Wigglesworthia</taxon>
    </lineage>
</organism>
<name>ISPF_WIGBR</name>
<keyword id="KW-0414">Isoprene biosynthesis</keyword>
<keyword id="KW-0456">Lyase</keyword>
<keyword id="KW-0479">Metal-binding</keyword>
<keyword id="KW-1185">Reference proteome</keyword>
<feature type="chain" id="PRO_0000189518" description="2-C-methyl-D-erythritol 2,4-cyclodiphosphate synthase">
    <location>
        <begin position="1"/>
        <end position="157"/>
    </location>
</feature>
<feature type="binding site" evidence="1">
    <location>
        <begin position="8"/>
        <end position="10"/>
    </location>
    <ligand>
        <name>4-CDP-2-C-methyl-D-erythritol 2-phosphate</name>
        <dbReference type="ChEBI" id="CHEBI:57919"/>
    </ligand>
</feature>
<feature type="binding site" evidence="1">
    <location>
        <position position="8"/>
    </location>
    <ligand>
        <name>a divalent metal cation</name>
        <dbReference type="ChEBI" id="CHEBI:60240"/>
    </ligand>
</feature>
<feature type="binding site" evidence="1">
    <location>
        <position position="10"/>
    </location>
    <ligand>
        <name>a divalent metal cation</name>
        <dbReference type="ChEBI" id="CHEBI:60240"/>
    </ligand>
</feature>
<feature type="binding site" evidence="1">
    <location>
        <begin position="35"/>
        <end position="36"/>
    </location>
    <ligand>
        <name>4-CDP-2-C-methyl-D-erythritol 2-phosphate</name>
        <dbReference type="ChEBI" id="CHEBI:57919"/>
    </ligand>
</feature>
<feature type="binding site" evidence="1">
    <location>
        <position position="43"/>
    </location>
    <ligand>
        <name>a divalent metal cation</name>
        <dbReference type="ChEBI" id="CHEBI:60240"/>
    </ligand>
</feature>
<feature type="binding site" evidence="1">
    <location>
        <begin position="57"/>
        <end position="59"/>
    </location>
    <ligand>
        <name>4-CDP-2-C-methyl-D-erythritol 2-phosphate</name>
        <dbReference type="ChEBI" id="CHEBI:57919"/>
    </ligand>
</feature>
<feature type="binding site" evidence="1">
    <location>
        <begin position="62"/>
        <end position="66"/>
    </location>
    <ligand>
        <name>4-CDP-2-C-methyl-D-erythritol 2-phosphate</name>
        <dbReference type="ChEBI" id="CHEBI:57919"/>
    </ligand>
</feature>
<feature type="binding site" evidence="1">
    <location>
        <position position="142"/>
    </location>
    <ligand>
        <name>4-CDP-2-C-methyl-D-erythritol 2-phosphate</name>
        <dbReference type="ChEBI" id="CHEBI:57919"/>
    </ligand>
</feature>
<feature type="site" description="Transition state stabilizer" evidence="1">
    <location>
        <position position="35"/>
    </location>
</feature>
<feature type="site" description="Transition state stabilizer" evidence="1">
    <location>
        <position position="133"/>
    </location>
</feature>
<gene>
    <name evidence="1" type="primary">ispF</name>
    <name type="ordered locus">WIGBR5310</name>
</gene>